<dbReference type="EC" id="2.5.1.41" evidence="1"/>
<dbReference type="EMBL" id="AE008384">
    <property type="protein sequence ID" value="AAM30639.1"/>
    <property type="molecule type" value="Genomic_DNA"/>
</dbReference>
<dbReference type="RefSeq" id="WP_011032893.1">
    <property type="nucleotide sequence ID" value="NC_003901.1"/>
</dbReference>
<dbReference type="SMR" id="Q8PYC0"/>
<dbReference type="KEGG" id="mma:MM_0943"/>
<dbReference type="PATRIC" id="fig|192952.21.peg.1114"/>
<dbReference type="eggNOG" id="arCOG01085">
    <property type="taxonomic scope" value="Archaea"/>
</dbReference>
<dbReference type="HOGENOM" id="CLU_068610_0_0_2"/>
<dbReference type="UniPathway" id="UPA00940"/>
<dbReference type="Proteomes" id="UP000000595">
    <property type="component" value="Chromosome"/>
</dbReference>
<dbReference type="GO" id="GO:0005737">
    <property type="term" value="C:cytoplasm"/>
    <property type="evidence" value="ECO:0007669"/>
    <property type="project" value="UniProtKB-SubCell"/>
</dbReference>
<dbReference type="GO" id="GO:0000107">
    <property type="term" value="F:imidazoleglycerol-phosphate synthase activity"/>
    <property type="evidence" value="ECO:0007669"/>
    <property type="project" value="TreeGrafter"/>
</dbReference>
<dbReference type="GO" id="GO:0000287">
    <property type="term" value="F:magnesium ion binding"/>
    <property type="evidence" value="ECO:0007669"/>
    <property type="project" value="UniProtKB-UniRule"/>
</dbReference>
<dbReference type="GO" id="GO:0047294">
    <property type="term" value="F:phosphoglycerol geranylgeranyltransferase activity"/>
    <property type="evidence" value="ECO:0007669"/>
    <property type="project" value="UniProtKB-UniRule"/>
</dbReference>
<dbReference type="GO" id="GO:0046474">
    <property type="term" value="P:glycerophospholipid biosynthetic process"/>
    <property type="evidence" value="ECO:0007669"/>
    <property type="project" value="UniProtKB-UniRule"/>
</dbReference>
<dbReference type="CDD" id="cd02812">
    <property type="entry name" value="PcrB_like"/>
    <property type="match status" value="1"/>
</dbReference>
<dbReference type="FunFam" id="3.20.20.390:FF:000001">
    <property type="entry name" value="Heptaprenylglyceryl phosphate synthase"/>
    <property type="match status" value="1"/>
</dbReference>
<dbReference type="Gene3D" id="3.20.20.390">
    <property type="entry name" value="FMN-linked oxidoreductases"/>
    <property type="match status" value="1"/>
</dbReference>
<dbReference type="HAMAP" id="MF_00112">
    <property type="entry name" value="GGGP_HepGP_synthase"/>
    <property type="match status" value="1"/>
</dbReference>
<dbReference type="InterPro" id="IPR038597">
    <property type="entry name" value="GGGP/HepGP_synthase_sf"/>
</dbReference>
<dbReference type="InterPro" id="IPR008205">
    <property type="entry name" value="GGGP_HepGP_synthase"/>
</dbReference>
<dbReference type="InterPro" id="IPR010946">
    <property type="entry name" value="GGGP_synth"/>
</dbReference>
<dbReference type="InterPro" id="IPR050064">
    <property type="entry name" value="IGPS_HisA/HisF"/>
</dbReference>
<dbReference type="NCBIfam" id="TIGR01769">
    <property type="entry name" value="GGGP"/>
    <property type="match status" value="1"/>
</dbReference>
<dbReference type="NCBIfam" id="TIGR01768">
    <property type="entry name" value="GGGP-family"/>
    <property type="match status" value="1"/>
</dbReference>
<dbReference type="NCBIfam" id="NF003198">
    <property type="entry name" value="PRK04169.1-2"/>
    <property type="match status" value="1"/>
</dbReference>
<dbReference type="PANTHER" id="PTHR21235:SF22">
    <property type="entry name" value="GERANYLGERANYLGLYCERYL PHOSPHATE SYNTHASE"/>
    <property type="match status" value="1"/>
</dbReference>
<dbReference type="PANTHER" id="PTHR21235">
    <property type="entry name" value="IMIDAZOLE GLYCEROL PHOSPHATE SYNTHASE SUBUNIT HISF/H IGP SYNTHASE SUBUNIT HISF/H"/>
    <property type="match status" value="1"/>
</dbReference>
<dbReference type="Pfam" id="PF01884">
    <property type="entry name" value="PcrB"/>
    <property type="match status" value="1"/>
</dbReference>
<dbReference type="SUPFAM" id="SSF51395">
    <property type="entry name" value="FMN-linked oxidoreductases"/>
    <property type="match status" value="1"/>
</dbReference>
<proteinExistence type="inferred from homology"/>
<protein>
    <recommendedName>
        <fullName evidence="1">Geranylgeranylglyceryl phosphate synthase</fullName>
        <shortName evidence="1">GGGP synthase</shortName>
        <shortName evidence="1">GGGPS</shortName>
        <ecNumber evidence="1">2.5.1.41</ecNumber>
    </recommendedName>
    <alternativeName>
        <fullName evidence="1">(S)-3-O-geranylgeranylglyceryl phosphate synthase</fullName>
    </alternativeName>
    <alternativeName>
        <fullName evidence="1">Phosphoglycerol geranylgeranyltransferase</fullName>
    </alternativeName>
</protein>
<reference key="1">
    <citation type="journal article" date="2002" name="J. Mol. Microbiol. Biotechnol.">
        <title>The genome of Methanosarcina mazei: evidence for lateral gene transfer between Bacteria and Archaea.</title>
        <authorList>
            <person name="Deppenmeier U."/>
            <person name="Johann A."/>
            <person name="Hartsch T."/>
            <person name="Merkl R."/>
            <person name="Schmitz R.A."/>
            <person name="Martinez-Arias R."/>
            <person name="Henne A."/>
            <person name="Wiezer A."/>
            <person name="Baeumer S."/>
            <person name="Jacobi C."/>
            <person name="Brueggemann H."/>
            <person name="Lienard T."/>
            <person name="Christmann A."/>
            <person name="Boemecke M."/>
            <person name="Steckel S."/>
            <person name="Bhattacharyya A."/>
            <person name="Lykidis A."/>
            <person name="Overbeek R."/>
            <person name="Klenk H.-P."/>
            <person name="Gunsalus R.P."/>
            <person name="Fritz H.-J."/>
            <person name="Gottschalk G."/>
        </authorList>
    </citation>
    <scope>NUCLEOTIDE SEQUENCE [LARGE SCALE GENOMIC DNA]</scope>
    <source>
        <strain>ATCC BAA-159 / DSM 3647 / Goe1 / Go1 / JCM 11833 / OCM 88</strain>
    </source>
</reference>
<keyword id="KW-0963">Cytoplasm</keyword>
<keyword id="KW-0444">Lipid biosynthesis</keyword>
<keyword id="KW-0443">Lipid metabolism</keyword>
<keyword id="KW-0460">Magnesium</keyword>
<keyword id="KW-0479">Metal-binding</keyword>
<keyword id="KW-0594">Phospholipid biosynthesis</keyword>
<keyword id="KW-1208">Phospholipid metabolism</keyword>
<keyword id="KW-0808">Transferase</keyword>
<name>GGGPS_METMA</name>
<sequence>MQVEAHLQKIIEKDGKVHLTLIDPASQTPDRAAEIALAAVEGGTDAIMIGGSTGASGTLLDETVIKIKENIHVPTILFPGSSAGLSKYADAVFFMSLLNSRDLGYVITNQVLGAPLVYRSQIEPISMAYLIVEPGGTVGWVGDAKLIPRKKPEIAAVYALAGKYLGMHYTYLEAGSGADSPVNPEMIGAVKQVLGENKLIVGGGIRNAETAKICTSAGADMIVTGTVVEEVKDVTAKVAEIVSAIKR</sequence>
<feature type="chain" id="PRO_0000138734" description="Geranylgeranylglyceryl phosphate synthase">
    <location>
        <begin position="1"/>
        <end position="247"/>
    </location>
</feature>
<feature type="binding site" evidence="1">
    <location>
        <position position="23"/>
    </location>
    <ligand>
        <name>Mg(2+)</name>
        <dbReference type="ChEBI" id="CHEBI:18420"/>
    </ligand>
</feature>
<feature type="binding site" evidence="1">
    <location>
        <position position="52"/>
    </location>
    <ligand>
        <name>Mg(2+)</name>
        <dbReference type="ChEBI" id="CHEBI:18420"/>
    </ligand>
</feature>
<feature type="binding site" evidence="1">
    <location>
        <begin position="171"/>
        <end position="177"/>
    </location>
    <ligand>
        <name>sn-glycerol 1-phosphate</name>
        <dbReference type="ChEBI" id="CHEBI:57685"/>
    </ligand>
</feature>
<feature type="binding site" evidence="1">
    <location>
        <begin position="203"/>
        <end position="204"/>
    </location>
    <ligand>
        <name>sn-glycerol 1-phosphate</name>
        <dbReference type="ChEBI" id="CHEBI:57685"/>
    </ligand>
</feature>
<feature type="binding site" evidence="1">
    <location>
        <begin position="225"/>
        <end position="226"/>
    </location>
    <ligand>
        <name>sn-glycerol 1-phosphate</name>
        <dbReference type="ChEBI" id="CHEBI:57685"/>
    </ligand>
</feature>
<accession>Q8PYC0</accession>
<comment type="function">
    <text evidence="1">Prenyltransferase that catalyzes the transfer of the geranylgeranyl moiety of geranylgeranyl diphosphate (GGPP) to the C3 hydroxyl of sn-glycerol-1-phosphate (G1P). This reaction is the first ether-bond-formation step in the biosynthesis of archaeal membrane lipids.</text>
</comment>
<comment type="catalytic activity">
    <reaction evidence="1">
        <text>sn-glycerol 1-phosphate + (2E,6E,10E)-geranylgeranyl diphosphate = sn-3-O-(geranylgeranyl)glycerol 1-phosphate + diphosphate</text>
        <dbReference type="Rhea" id="RHEA:23404"/>
        <dbReference type="ChEBI" id="CHEBI:33019"/>
        <dbReference type="ChEBI" id="CHEBI:57677"/>
        <dbReference type="ChEBI" id="CHEBI:57685"/>
        <dbReference type="ChEBI" id="CHEBI:58756"/>
        <dbReference type="EC" id="2.5.1.41"/>
    </reaction>
</comment>
<comment type="cofactor">
    <cofactor evidence="1">
        <name>Mg(2+)</name>
        <dbReference type="ChEBI" id="CHEBI:18420"/>
    </cofactor>
</comment>
<comment type="pathway">
    <text evidence="1">Membrane lipid metabolism; glycerophospholipid metabolism.</text>
</comment>
<comment type="subcellular location">
    <subcellularLocation>
        <location evidence="1">Cytoplasm</location>
    </subcellularLocation>
</comment>
<comment type="similarity">
    <text evidence="1">Belongs to the GGGP/HepGP synthase family. Group II subfamily.</text>
</comment>
<evidence type="ECO:0000255" key="1">
    <source>
        <dbReference type="HAMAP-Rule" id="MF_00112"/>
    </source>
</evidence>
<gene>
    <name type="ordered locus">MM_0943</name>
</gene>
<organism>
    <name type="scientific">Methanosarcina mazei (strain ATCC BAA-159 / DSM 3647 / Goe1 / Go1 / JCM 11833 / OCM 88)</name>
    <name type="common">Methanosarcina frisia</name>
    <dbReference type="NCBI Taxonomy" id="192952"/>
    <lineage>
        <taxon>Archaea</taxon>
        <taxon>Methanobacteriati</taxon>
        <taxon>Methanobacteriota</taxon>
        <taxon>Stenosarchaea group</taxon>
        <taxon>Methanomicrobia</taxon>
        <taxon>Methanosarcinales</taxon>
        <taxon>Methanosarcinaceae</taxon>
        <taxon>Methanosarcina</taxon>
    </lineage>
</organism>